<protein>
    <recommendedName>
        <fullName>4-deoxy-L-threo-5-hexosulose-uronate ketol-isomerase 1</fullName>
        <ecNumber>5.3.1.17</ecNumber>
    </recommendedName>
    <alternativeName>
        <fullName>5-keto-4-deoxyuronate isomerase 1</fullName>
    </alternativeName>
    <alternativeName>
        <fullName>DKI isomerase 1</fullName>
    </alternativeName>
</protein>
<accession>Q838L9</accession>
<sequence>METRYTHSPADIRHYSTEQLRDEFLVEKVFIPGAISLTYTHNDRMIFGGVTPTTEELEIILDKELGVDYFLERRELGVINIGGPGFIEIDGAKETMKKQDGYYIGKETKHVRFSSENPDNPAKFYISCVPAHHKYPNVKISIDEITPMETGDPLTLNQRKIYQYIHPNVCESCQLQMGYTILEPGSAWNTMPCHTHERRMEAYVYFDMEEDTRIFHMMGKPDETKHLVMSNEQAAISPSWSIHSGVGTSNYSFIWAMCGENITYTDMDMVAMDQLK</sequence>
<name>KDUI1_ENTFA</name>
<proteinExistence type="evidence at protein level"/>
<evidence type="ECO:0000250" key="1"/>
<evidence type="ECO:0000305" key="2"/>
<evidence type="ECO:0007829" key="3">
    <source>
        <dbReference type="PDB" id="1YWK"/>
    </source>
</evidence>
<comment type="function">
    <text evidence="1">Catalyzes the isomerization of 5-dehydro-4-deoxy-D-glucuronate to 3-deoxy-D-glycero-2,5-hexodiulosonate.</text>
</comment>
<comment type="catalytic activity">
    <reaction>
        <text>5-dehydro-4-deoxy-D-glucuronate = 3-deoxy-D-glycero-2,5-hexodiulosonate</text>
        <dbReference type="Rhea" id="RHEA:23896"/>
        <dbReference type="ChEBI" id="CHEBI:17117"/>
        <dbReference type="ChEBI" id="CHEBI:29071"/>
        <dbReference type="EC" id="5.3.1.17"/>
    </reaction>
</comment>
<comment type="cofactor">
    <cofactor evidence="1">
        <name>Zn(2+)</name>
        <dbReference type="ChEBI" id="CHEBI:29105"/>
    </cofactor>
    <text evidence="1">Binds 1 zinc ion per subunit.</text>
</comment>
<comment type="pathway">
    <text>Glycan metabolism; pectin degradation; 2-dehydro-3-deoxy-D-gluconate from pectin: step 4/5.</text>
</comment>
<comment type="similarity">
    <text evidence="2">Belongs to the KduI family.</text>
</comment>
<dbReference type="EC" id="5.3.1.17"/>
<dbReference type="EMBL" id="AE016830">
    <property type="protein sequence ID" value="AAO80282.1"/>
    <property type="molecule type" value="Genomic_DNA"/>
</dbReference>
<dbReference type="RefSeq" id="NP_814211.1">
    <property type="nucleotide sequence ID" value="NC_004668.1"/>
</dbReference>
<dbReference type="PDB" id="1YWK">
    <property type="method" value="X-ray"/>
    <property type="resolution" value="2.95 A"/>
    <property type="chains" value="A/B/C/D/E/F=1-276"/>
</dbReference>
<dbReference type="PDBsum" id="1YWK"/>
<dbReference type="SMR" id="Q838L9"/>
<dbReference type="STRING" id="226185.EF_0425"/>
<dbReference type="DNASU" id="1199341"/>
<dbReference type="EnsemblBacteria" id="AAO80282">
    <property type="protein sequence ID" value="AAO80282"/>
    <property type="gene ID" value="EF_0425"/>
</dbReference>
<dbReference type="KEGG" id="efa:EF0425"/>
<dbReference type="PATRIC" id="fig|226185.9.peg.394"/>
<dbReference type="eggNOG" id="COG3717">
    <property type="taxonomic scope" value="Bacteria"/>
</dbReference>
<dbReference type="HOGENOM" id="CLU_062609_0_0_9"/>
<dbReference type="UniPathway" id="UPA00545">
    <property type="reaction ID" value="UER00826"/>
</dbReference>
<dbReference type="EvolutionaryTrace" id="Q838L9"/>
<dbReference type="Proteomes" id="UP000001415">
    <property type="component" value="Chromosome"/>
</dbReference>
<dbReference type="GO" id="GO:0008697">
    <property type="term" value="F:4-deoxy-L-threo-5-hexosulose-uronate ketol-isomerase activity"/>
    <property type="evidence" value="ECO:0007669"/>
    <property type="project" value="UniProtKB-UniRule"/>
</dbReference>
<dbReference type="GO" id="GO:0008270">
    <property type="term" value="F:zinc ion binding"/>
    <property type="evidence" value="ECO:0007669"/>
    <property type="project" value="UniProtKB-UniRule"/>
</dbReference>
<dbReference type="GO" id="GO:0019698">
    <property type="term" value="P:D-galacturonate catabolic process"/>
    <property type="evidence" value="ECO:0007669"/>
    <property type="project" value="TreeGrafter"/>
</dbReference>
<dbReference type="GO" id="GO:0042840">
    <property type="term" value="P:D-glucuronate catabolic process"/>
    <property type="evidence" value="ECO:0007669"/>
    <property type="project" value="TreeGrafter"/>
</dbReference>
<dbReference type="GO" id="GO:0045490">
    <property type="term" value="P:pectin catabolic process"/>
    <property type="evidence" value="ECO:0007669"/>
    <property type="project" value="UniProtKB-UniRule"/>
</dbReference>
<dbReference type="CDD" id="cd20491">
    <property type="entry name" value="cupin_KduI_C"/>
    <property type="match status" value="1"/>
</dbReference>
<dbReference type="CDD" id="cd20294">
    <property type="entry name" value="cupin_KduI_N"/>
    <property type="match status" value="1"/>
</dbReference>
<dbReference type="Gene3D" id="2.60.120.10">
    <property type="entry name" value="Jelly Rolls"/>
    <property type="match status" value="1"/>
</dbReference>
<dbReference type="Gene3D" id="2.60.120.520">
    <property type="entry name" value="pectin degrading enzyme 5-keto 4- deoxyuronate isomerase, domain 1"/>
    <property type="match status" value="1"/>
</dbReference>
<dbReference type="HAMAP" id="MF_00687">
    <property type="entry name" value="KduI"/>
    <property type="match status" value="1"/>
</dbReference>
<dbReference type="InterPro" id="IPR007045">
    <property type="entry name" value="KduI"/>
</dbReference>
<dbReference type="InterPro" id="IPR021120">
    <property type="entry name" value="KduI/IolB_isomerase"/>
</dbReference>
<dbReference type="InterPro" id="IPR027449">
    <property type="entry name" value="KduI_N"/>
</dbReference>
<dbReference type="InterPro" id="IPR014710">
    <property type="entry name" value="RmlC-like_jellyroll"/>
</dbReference>
<dbReference type="InterPro" id="IPR011051">
    <property type="entry name" value="RmlC_Cupin_sf"/>
</dbReference>
<dbReference type="NCBIfam" id="NF002091">
    <property type="entry name" value="PRK00924.1"/>
    <property type="match status" value="1"/>
</dbReference>
<dbReference type="PANTHER" id="PTHR38461">
    <property type="entry name" value="4-DEOXY-L-THREO-5-HEXOSULOSE-URONATE KETOL-ISOMERASE"/>
    <property type="match status" value="1"/>
</dbReference>
<dbReference type="PANTHER" id="PTHR38461:SF1">
    <property type="entry name" value="4-DEOXY-L-THREO-5-HEXOSULOSE-URONATE KETOL-ISOMERASE"/>
    <property type="match status" value="1"/>
</dbReference>
<dbReference type="Pfam" id="PF04962">
    <property type="entry name" value="KduI"/>
    <property type="match status" value="1"/>
</dbReference>
<dbReference type="PIRSF" id="PIRSF006625">
    <property type="entry name" value="KduI"/>
    <property type="match status" value="1"/>
</dbReference>
<dbReference type="SUPFAM" id="SSF51182">
    <property type="entry name" value="RmlC-like cupins"/>
    <property type="match status" value="1"/>
</dbReference>
<organism>
    <name type="scientific">Enterococcus faecalis (strain ATCC 700802 / V583)</name>
    <dbReference type="NCBI Taxonomy" id="226185"/>
    <lineage>
        <taxon>Bacteria</taxon>
        <taxon>Bacillati</taxon>
        <taxon>Bacillota</taxon>
        <taxon>Bacilli</taxon>
        <taxon>Lactobacillales</taxon>
        <taxon>Enterococcaceae</taxon>
        <taxon>Enterococcus</taxon>
    </lineage>
</organism>
<keyword id="KW-0002">3D-structure</keyword>
<keyword id="KW-0413">Isomerase</keyword>
<keyword id="KW-0479">Metal-binding</keyword>
<keyword id="KW-1185">Reference proteome</keyword>
<keyword id="KW-0862">Zinc</keyword>
<gene>
    <name type="primary">kduI1</name>
    <name type="synonym">kduI-1</name>
    <name type="ordered locus">EF_0425</name>
</gene>
<reference key="1">
    <citation type="journal article" date="2003" name="Science">
        <title>Role of mobile DNA in the evolution of vancomycin-resistant Enterococcus faecalis.</title>
        <authorList>
            <person name="Paulsen I.T."/>
            <person name="Banerjei L."/>
            <person name="Myers G.S.A."/>
            <person name="Nelson K.E."/>
            <person name="Seshadri R."/>
            <person name="Read T.D."/>
            <person name="Fouts D.E."/>
            <person name="Eisen J.A."/>
            <person name="Gill S.R."/>
            <person name="Heidelberg J.F."/>
            <person name="Tettelin H."/>
            <person name="Dodson R.J."/>
            <person name="Umayam L.A."/>
            <person name="Brinkac L.M."/>
            <person name="Beanan M.J."/>
            <person name="Daugherty S.C."/>
            <person name="DeBoy R.T."/>
            <person name="Durkin S.A."/>
            <person name="Kolonay J.F."/>
            <person name="Madupu R."/>
            <person name="Nelson W.C."/>
            <person name="Vamathevan J.J."/>
            <person name="Tran B."/>
            <person name="Upton J."/>
            <person name="Hansen T."/>
            <person name="Shetty J."/>
            <person name="Khouri H.M."/>
            <person name="Utterback T.R."/>
            <person name="Radune D."/>
            <person name="Ketchum K.A."/>
            <person name="Dougherty B.A."/>
            <person name="Fraser C.M."/>
        </authorList>
    </citation>
    <scope>NUCLEOTIDE SEQUENCE [LARGE SCALE GENOMIC DNA]</scope>
    <source>
        <strain>ATCC 700802 / V583</strain>
    </source>
</reference>
<feature type="chain" id="PRO_0000215488" description="4-deoxy-L-threo-5-hexosulose-uronate ketol-isomerase 1">
    <location>
        <begin position="1"/>
        <end position="276"/>
    </location>
</feature>
<feature type="binding site" evidence="1">
    <location>
        <position position="194"/>
    </location>
    <ligand>
        <name>Zn(2+)</name>
        <dbReference type="ChEBI" id="CHEBI:29105"/>
    </ligand>
</feature>
<feature type="binding site" evidence="1">
    <location>
        <position position="196"/>
    </location>
    <ligand>
        <name>Zn(2+)</name>
        <dbReference type="ChEBI" id="CHEBI:29105"/>
    </ligand>
</feature>
<feature type="binding site" evidence="1">
    <location>
        <position position="201"/>
    </location>
    <ligand>
        <name>Zn(2+)</name>
        <dbReference type="ChEBI" id="CHEBI:29105"/>
    </ligand>
</feature>
<feature type="binding site" evidence="1">
    <location>
        <position position="243"/>
    </location>
    <ligand>
        <name>Zn(2+)</name>
        <dbReference type="ChEBI" id="CHEBI:29105"/>
    </ligand>
</feature>
<feature type="strand" evidence="3">
    <location>
        <begin position="1"/>
        <end position="4"/>
    </location>
</feature>
<feature type="helix" evidence="3">
    <location>
        <begin position="9"/>
        <end position="12"/>
    </location>
</feature>
<feature type="helix" evidence="3">
    <location>
        <begin position="17"/>
        <end position="24"/>
    </location>
</feature>
<feature type="strand" evidence="3">
    <location>
        <begin position="25"/>
        <end position="27"/>
    </location>
</feature>
<feature type="strand" evidence="3">
    <location>
        <begin position="34"/>
        <end position="40"/>
    </location>
</feature>
<feature type="turn" evidence="3">
    <location>
        <begin position="41"/>
        <end position="44"/>
    </location>
</feature>
<feature type="strand" evidence="3">
    <location>
        <begin position="45"/>
        <end position="50"/>
    </location>
</feature>
<feature type="strand" evidence="3">
    <location>
        <begin position="53"/>
        <end position="55"/>
    </location>
</feature>
<feature type="helix" evidence="3">
    <location>
        <begin position="63"/>
        <end position="65"/>
    </location>
</feature>
<feature type="strand" evidence="3">
    <location>
        <begin position="67"/>
        <end position="69"/>
    </location>
</feature>
<feature type="turn" evidence="3">
    <location>
        <begin position="70"/>
        <end position="73"/>
    </location>
</feature>
<feature type="strand" evidence="3">
    <location>
        <begin position="74"/>
        <end position="80"/>
    </location>
</feature>
<feature type="strand" evidence="3">
    <location>
        <begin position="85"/>
        <end position="89"/>
    </location>
</feature>
<feature type="strand" evidence="3">
    <location>
        <begin position="92"/>
        <end position="96"/>
    </location>
</feature>
<feature type="strand" evidence="3">
    <location>
        <begin position="101"/>
        <end position="104"/>
    </location>
</feature>
<feature type="strand" evidence="3">
    <location>
        <begin position="111"/>
        <end position="116"/>
    </location>
</feature>
<feature type="strand" evidence="3">
    <location>
        <begin position="124"/>
        <end position="130"/>
    </location>
</feature>
<feature type="strand" evidence="3">
    <location>
        <begin position="138"/>
        <end position="140"/>
    </location>
</feature>
<feature type="turn" evidence="3">
    <location>
        <begin position="142"/>
        <end position="144"/>
    </location>
</feature>
<feature type="helix" evidence="3">
    <location>
        <begin position="153"/>
        <end position="155"/>
    </location>
</feature>
<feature type="strand" evidence="3">
    <location>
        <begin position="159"/>
        <end position="166"/>
    </location>
</feature>
<feature type="turn" evidence="3">
    <location>
        <begin position="167"/>
        <end position="169"/>
    </location>
</feature>
<feature type="strand" evidence="3">
    <location>
        <begin position="176"/>
        <end position="182"/>
    </location>
</feature>
<feature type="strand" evidence="3">
    <location>
        <begin position="200"/>
        <end position="207"/>
    </location>
</feature>
<feature type="strand" evidence="3">
    <location>
        <begin position="214"/>
        <end position="220"/>
    </location>
</feature>
<feature type="strand" evidence="3">
    <location>
        <begin position="225"/>
        <end position="229"/>
    </location>
</feature>
<feature type="strand" evidence="3">
    <location>
        <begin position="233"/>
        <end position="237"/>
    </location>
</feature>
<feature type="strand" evidence="3">
    <location>
        <begin position="245"/>
        <end position="249"/>
    </location>
</feature>
<feature type="strand" evidence="3">
    <location>
        <begin position="252"/>
        <end position="258"/>
    </location>
</feature>